<evidence type="ECO:0000255" key="1">
    <source>
        <dbReference type="HAMAP-Rule" id="MF_00548"/>
    </source>
</evidence>
<evidence type="ECO:0000305" key="2"/>
<gene>
    <name evidence="1" type="primary">zupT</name>
    <name type="ordered locus">NMB0175</name>
</gene>
<dbReference type="EMBL" id="AE002098">
    <property type="protein sequence ID" value="AAF40632.1"/>
    <property type="molecule type" value="Genomic_DNA"/>
</dbReference>
<dbReference type="PIR" id="G81230">
    <property type="entry name" value="G81230"/>
</dbReference>
<dbReference type="RefSeq" id="NP_273233.1">
    <property type="nucleotide sequence ID" value="NC_003112.2"/>
</dbReference>
<dbReference type="RefSeq" id="WP_002224778.1">
    <property type="nucleotide sequence ID" value="NC_003112.2"/>
</dbReference>
<dbReference type="SMR" id="Q9K1H6"/>
<dbReference type="FunCoup" id="Q9K1H6">
    <property type="interactions" value="209"/>
</dbReference>
<dbReference type="STRING" id="122586.NMB0175"/>
<dbReference type="PaxDb" id="122586-NMB0175"/>
<dbReference type="KEGG" id="nme:NMB0175"/>
<dbReference type="PATRIC" id="fig|122586.8.peg.217"/>
<dbReference type="HOGENOM" id="CLU_015114_1_3_4"/>
<dbReference type="InParanoid" id="Q9K1H6"/>
<dbReference type="OrthoDB" id="9787346at2"/>
<dbReference type="PRO" id="PR:Q9K1H6"/>
<dbReference type="Proteomes" id="UP000000425">
    <property type="component" value="Chromosome"/>
</dbReference>
<dbReference type="GO" id="GO:0016020">
    <property type="term" value="C:membrane"/>
    <property type="evidence" value="ECO:0000318"/>
    <property type="project" value="GO_Central"/>
</dbReference>
<dbReference type="GO" id="GO:0005886">
    <property type="term" value="C:plasma membrane"/>
    <property type="evidence" value="ECO:0007669"/>
    <property type="project" value="UniProtKB-SubCell"/>
</dbReference>
<dbReference type="GO" id="GO:0046872">
    <property type="term" value="F:metal ion binding"/>
    <property type="evidence" value="ECO:0007669"/>
    <property type="project" value="UniProtKB-KW"/>
</dbReference>
<dbReference type="GO" id="GO:0005385">
    <property type="term" value="F:zinc ion transmembrane transporter activity"/>
    <property type="evidence" value="ECO:0000318"/>
    <property type="project" value="GO_Central"/>
</dbReference>
<dbReference type="GO" id="GO:0071577">
    <property type="term" value="P:zinc ion transmembrane transport"/>
    <property type="evidence" value="ECO:0000318"/>
    <property type="project" value="GO_Central"/>
</dbReference>
<dbReference type="HAMAP" id="MF_00548">
    <property type="entry name" value="ZupT"/>
    <property type="match status" value="1"/>
</dbReference>
<dbReference type="InterPro" id="IPR003689">
    <property type="entry name" value="ZIP"/>
</dbReference>
<dbReference type="InterPro" id="IPR023498">
    <property type="entry name" value="Zn_transptr_ZupT"/>
</dbReference>
<dbReference type="NCBIfam" id="NF003243">
    <property type="entry name" value="PRK04201.1"/>
    <property type="match status" value="1"/>
</dbReference>
<dbReference type="PANTHER" id="PTHR11040:SF205">
    <property type="entry name" value="ZINC TRANSPORTER ZUPT"/>
    <property type="match status" value="1"/>
</dbReference>
<dbReference type="PANTHER" id="PTHR11040">
    <property type="entry name" value="ZINC/IRON TRANSPORTER"/>
    <property type="match status" value="1"/>
</dbReference>
<dbReference type="Pfam" id="PF02535">
    <property type="entry name" value="Zip"/>
    <property type="match status" value="1"/>
</dbReference>
<sequence length="269" mass="28425">MPDFSMSNLAVAFSITLAAGLFTVLGSGLVMFSKTPNPRVLSFGLAFAGGAMVYVSLTEIFSKSSEAFAEIYDKDHAFAAATMAFLAGMGGIALIDRLVPNPHETLDAQDPSFQESKRRHIARVGMMAAFAITAHNFPEGLATFFATLENPAVGMPLALAIAIHNIPEGISIAAPVYFATRSRKKTVWACLLSGLAEPLGAALGYLVLQPFLSPAVFGSVFGVIAGVMVFLALDELLPAAKRYSDGHETVYGLTTGMAVIAVSLVLFHF</sequence>
<name>ZUPT_NEIMB</name>
<comment type="function">
    <text evidence="1">Mediates zinc uptake. May also transport other divalent cations.</text>
</comment>
<comment type="catalytic activity">
    <reaction evidence="1">
        <text>Zn(2+)(in) = Zn(2+)(out)</text>
        <dbReference type="Rhea" id="RHEA:29351"/>
        <dbReference type="ChEBI" id="CHEBI:29105"/>
    </reaction>
</comment>
<comment type="subcellular location">
    <subcellularLocation>
        <location evidence="1">Cell inner membrane</location>
        <topology evidence="1 2">Multi-pass membrane protein</topology>
    </subcellularLocation>
</comment>
<comment type="similarity">
    <text evidence="1 2">Belongs to the ZIP transporter (TC 2.A.5) family. ZupT subfamily.</text>
</comment>
<accession>Q9K1H6</accession>
<reference key="1">
    <citation type="journal article" date="2000" name="Science">
        <title>Complete genome sequence of Neisseria meningitidis serogroup B strain MC58.</title>
        <authorList>
            <person name="Tettelin H."/>
            <person name="Saunders N.J."/>
            <person name="Heidelberg J.F."/>
            <person name="Jeffries A.C."/>
            <person name="Nelson K.E."/>
            <person name="Eisen J.A."/>
            <person name="Ketchum K.A."/>
            <person name="Hood D.W."/>
            <person name="Peden J.F."/>
            <person name="Dodson R.J."/>
            <person name="Nelson W.C."/>
            <person name="Gwinn M.L."/>
            <person name="DeBoy R.T."/>
            <person name="Peterson J.D."/>
            <person name="Hickey E.K."/>
            <person name="Haft D.H."/>
            <person name="Salzberg S.L."/>
            <person name="White O."/>
            <person name="Fleischmann R.D."/>
            <person name="Dougherty B.A."/>
            <person name="Mason T.M."/>
            <person name="Ciecko A."/>
            <person name="Parksey D.S."/>
            <person name="Blair E."/>
            <person name="Cittone H."/>
            <person name="Clark E.B."/>
            <person name="Cotton M.D."/>
            <person name="Utterback T.R."/>
            <person name="Khouri H.M."/>
            <person name="Qin H."/>
            <person name="Vamathevan J.J."/>
            <person name="Gill J."/>
            <person name="Scarlato V."/>
            <person name="Masignani V."/>
            <person name="Pizza M."/>
            <person name="Grandi G."/>
            <person name="Sun L."/>
            <person name="Smith H.O."/>
            <person name="Fraser C.M."/>
            <person name="Moxon E.R."/>
            <person name="Rappuoli R."/>
            <person name="Venter J.C."/>
        </authorList>
    </citation>
    <scope>NUCLEOTIDE SEQUENCE [LARGE SCALE GENOMIC DNA]</scope>
    <source>
        <strain>ATCC BAA-335 / MC58</strain>
    </source>
</reference>
<proteinExistence type="inferred from homology"/>
<feature type="chain" id="PRO_0000207275" description="Zinc transporter ZupT">
    <location>
        <begin position="1"/>
        <end position="269"/>
    </location>
</feature>
<feature type="transmembrane region" description="Helical" evidence="1">
    <location>
        <begin position="12"/>
        <end position="32"/>
    </location>
</feature>
<feature type="transmembrane region" description="Helical" evidence="1">
    <location>
        <begin position="41"/>
        <end position="61"/>
    </location>
</feature>
<feature type="transmembrane region" description="Helical" evidence="1">
    <location>
        <begin position="75"/>
        <end position="95"/>
    </location>
</feature>
<feature type="transmembrane region" description="Helical" evidence="1">
    <location>
        <begin position="126"/>
        <end position="146"/>
    </location>
</feature>
<feature type="transmembrane region" description="Helical" evidence="1">
    <location>
        <begin position="152"/>
        <end position="172"/>
    </location>
</feature>
<feature type="transmembrane region" description="Helical" evidence="1">
    <location>
        <begin position="187"/>
        <end position="207"/>
    </location>
</feature>
<feature type="transmembrane region" description="Helical" evidence="1">
    <location>
        <begin position="211"/>
        <end position="231"/>
    </location>
</feature>
<feature type="transmembrane region" description="Helical" evidence="1">
    <location>
        <begin position="249"/>
        <end position="269"/>
    </location>
</feature>
<feature type="binding site" description="M2 metal binding site" evidence="1">
    <location>
        <position position="136"/>
    </location>
    <ligand>
        <name>Fe(2+)</name>
        <dbReference type="ChEBI" id="CHEBI:29033"/>
    </ligand>
</feature>
<feature type="binding site" description="M2 metal binding site" evidence="1">
    <location>
        <position position="139"/>
    </location>
    <ligand>
        <name>Fe(2+)</name>
        <dbReference type="ChEBI" id="CHEBI:29033"/>
    </ligand>
</feature>
<feature type="binding site" description="M1 metal binding site" evidence="1">
    <location>
        <position position="139"/>
    </location>
    <ligand>
        <name>Zn(2+)</name>
        <dbReference type="ChEBI" id="CHEBI:29105"/>
    </ligand>
</feature>
<feature type="binding site" description="M1 metal binding site" evidence="1">
    <location>
        <position position="164"/>
    </location>
    <ligand>
        <name>Zn(2+)</name>
        <dbReference type="ChEBI" id="CHEBI:29105"/>
    </ligand>
</feature>
<feature type="binding site" description="M2 metal binding site" evidence="1">
    <location>
        <position position="165"/>
    </location>
    <ligand>
        <name>Fe(2+)</name>
        <dbReference type="ChEBI" id="CHEBI:29033"/>
    </ligand>
</feature>
<feature type="binding site" description="M2 metal binding site" evidence="1">
    <location>
        <position position="168"/>
    </location>
    <ligand>
        <name>Fe(2+)</name>
        <dbReference type="ChEBI" id="CHEBI:29033"/>
    </ligand>
</feature>
<feature type="binding site" description="M1 metal binding site" evidence="1">
    <location>
        <position position="168"/>
    </location>
    <ligand>
        <name>Zn(2+)</name>
        <dbReference type="ChEBI" id="CHEBI:29105"/>
    </ligand>
</feature>
<feature type="binding site" description="M2 metal binding site" evidence="1">
    <location>
        <position position="197"/>
    </location>
    <ligand>
        <name>Fe(2+)</name>
        <dbReference type="ChEBI" id="CHEBI:29033"/>
    </ligand>
</feature>
<keyword id="KW-0997">Cell inner membrane</keyword>
<keyword id="KW-1003">Cell membrane</keyword>
<keyword id="KW-0406">Ion transport</keyword>
<keyword id="KW-0408">Iron</keyword>
<keyword id="KW-0472">Membrane</keyword>
<keyword id="KW-0479">Metal-binding</keyword>
<keyword id="KW-1185">Reference proteome</keyword>
<keyword id="KW-0812">Transmembrane</keyword>
<keyword id="KW-1133">Transmembrane helix</keyword>
<keyword id="KW-0813">Transport</keyword>
<keyword id="KW-0862">Zinc</keyword>
<keyword id="KW-0864">Zinc transport</keyword>
<protein>
    <recommendedName>
        <fullName evidence="1">Zinc transporter ZupT</fullName>
    </recommendedName>
</protein>
<organism>
    <name type="scientific">Neisseria meningitidis serogroup B (strain ATCC BAA-335 / MC58)</name>
    <dbReference type="NCBI Taxonomy" id="122586"/>
    <lineage>
        <taxon>Bacteria</taxon>
        <taxon>Pseudomonadati</taxon>
        <taxon>Pseudomonadota</taxon>
        <taxon>Betaproteobacteria</taxon>
        <taxon>Neisseriales</taxon>
        <taxon>Neisseriaceae</taxon>
        <taxon>Neisseria</taxon>
    </lineage>
</organism>